<feature type="signal peptide">
    <location>
        <begin position="1"/>
        <end position="31"/>
    </location>
</feature>
<feature type="chain" id="PRO_5000066020" description="Pectate lyase A">
    <location>
        <begin position="32"/>
        <end position="323"/>
    </location>
</feature>
<feature type="active site" evidence="2">
    <location>
        <position position="222"/>
    </location>
</feature>
<feature type="binding site" evidence="1">
    <location>
        <position position="136"/>
    </location>
    <ligand>
        <name>Ca(2+)</name>
        <dbReference type="ChEBI" id="CHEBI:29108"/>
    </ligand>
</feature>
<feature type="binding site" evidence="1">
    <location>
        <position position="165"/>
    </location>
    <ligand>
        <name>Ca(2+)</name>
        <dbReference type="ChEBI" id="CHEBI:29108"/>
    </ligand>
</feature>
<feature type="binding site" evidence="1">
    <location>
        <position position="169"/>
    </location>
    <ligand>
        <name>Ca(2+)</name>
        <dbReference type="ChEBI" id="CHEBI:29108"/>
    </ligand>
</feature>
<feature type="glycosylation site" description="N-linked (GlcNAc...) asparagine" evidence="2">
    <location>
        <position position="95"/>
    </location>
</feature>
<comment type="function">
    <text evidence="3">Pectinolytic enzyme consist of four classes of enzymes: pectin lyase, polygalacturonase, pectin methylesterase and rhamnogalacturonase. Among pectinolytic enzymes, pectin lyase is the most important in depolymerization of pectin, since it cleaves internal glycosidic bonds of highly methylated pectins. Favors pectate, the anion, over pectin, the methyl ester.</text>
</comment>
<comment type="catalytic activity">
    <reaction>
        <text>Eliminative cleavage of (1-&gt;4)-alpha-D-galacturonan to give oligosaccharides with 4-deoxy-alpha-D-galact-4-enuronosyl groups at their non-reducing ends.</text>
        <dbReference type="EC" id="4.2.2.2"/>
    </reaction>
</comment>
<comment type="cofactor">
    <cofactor evidence="3">
        <name>Ca(2+)</name>
        <dbReference type="ChEBI" id="CHEBI:29108"/>
    </cofactor>
    <text evidence="3">Binds 1 Ca(2+) ion per subunit.</text>
</comment>
<comment type="subcellular location">
    <subcellularLocation>
        <location evidence="4">Secreted</location>
    </subcellularLocation>
</comment>
<comment type="similarity">
    <text evidence="4">Belongs to the polysaccharide lyase 1 family.</text>
</comment>
<name>PLYA_ASPNG</name>
<keyword id="KW-0106">Calcium</keyword>
<keyword id="KW-0119">Carbohydrate metabolism</keyword>
<keyword id="KW-0961">Cell wall biogenesis/degradation</keyword>
<keyword id="KW-0325">Glycoprotein</keyword>
<keyword id="KW-0456">Lyase</keyword>
<keyword id="KW-0479">Metal-binding</keyword>
<keyword id="KW-0624">Polysaccharide degradation</keyword>
<keyword id="KW-0964">Secreted</keyword>
<keyword id="KW-0732">Signal</keyword>
<dbReference type="EC" id="4.2.2.2"/>
<dbReference type="EMBL" id="AJ276331">
    <property type="protein sequence ID" value="CAC33162.1"/>
    <property type="molecule type" value="Genomic_DNA"/>
</dbReference>
<dbReference type="SMR" id="Q9C2Z0"/>
<dbReference type="CAZy" id="PL1">
    <property type="family name" value="Polysaccharide Lyase Family 1"/>
</dbReference>
<dbReference type="GlyCosmos" id="Q9C2Z0">
    <property type="glycosylation" value="1 site, No reported glycans"/>
</dbReference>
<dbReference type="PaxDb" id="5061-CADANGAP00008167"/>
<dbReference type="VEuPathDB" id="FungiDB:An10g00870"/>
<dbReference type="VEuPathDB" id="FungiDB:ASPNIDRAFT2_1090563"/>
<dbReference type="VEuPathDB" id="FungiDB:ATCC64974_63830"/>
<dbReference type="VEuPathDB" id="FungiDB:M747DRAFT_374887"/>
<dbReference type="eggNOG" id="ENOG502S66G">
    <property type="taxonomic scope" value="Eukaryota"/>
</dbReference>
<dbReference type="BioCyc" id="MetaCyc:MONOMER-20558"/>
<dbReference type="BRENDA" id="4.2.2.2">
    <property type="organism ID" value="518"/>
</dbReference>
<dbReference type="GO" id="GO:0005576">
    <property type="term" value="C:extracellular region"/>
    <property type="evidence" value="ECO:0000314"/>
    <property type="project" value="UniProtKB"/>
</dbReference>
<dbReference type="GO" id="GO:0046872">
    <property type="term" value="F:metal ion binding"/>
    <property type="evidence" value="ECO:0007669"/>
    <property type="project" value="UniProtKB-KW"/>
</dbReference>
<dbReference type="GO" id="GO:0030570">
    <property type="term" value="F:pectate lyase activity"/>
    <property type="evidence" value="ECO:0000314"/>
    <property type="project" value="UniProtKB"/>
</dbReference>
<dbReference type="GO" id="GO:0071555">
    <property type="term" value="P:cell wall organization"/>
    <property type="evidence" value="ECO:0007669"/>
    <property type="project" value="UniProtKB-KW"/>
</dbReference>
<dbReference type="GO" id="GO:0045490">
    <property type="term" value="P:pectin catabolic process"/>
    <property type="evidence" value="ECO:0000314"/>
    <property type="project" value="UniProtKB"/>
</dbReference>
<dbReference type="FunFam" id="2.160.20.10:FF:000036">
    <property type="entry name" value="Pectate lyase A"/>
    <property type="match status" value="1"/>
</dbReference>
<dbReference type="Gene3D" id="2.160.20.10">
    <property type="entry name" value="Single-stranded right-handed beta-helix, Pectin lyase-like"/>
    <property type="match status" value="1"/>
</dbReference>
<dbReference type="InterPro" id="IPR002022">
    <property type="entry name" value="Pec_lyase"/>
</dbReference>
<dbReference type="InterPro" id="IPR012334">
    <property type="entry name" value="Pectin_lyas_fold"/>
</dbReference>
<dbReference type="InterPro" id="IPR011050">
    <property type="entry name" value="Pectin_lyase_fold/virulence"/>
</dbReference>
<dbReference type="InterPro" id="IPR045032">
    <property type="entry name" value="PEL"/>
</dbReference>
<dbReference type="PANTHER" id="PTHR31683">
    <property type="entry name" value="PECTATE LYASE 18-RELATED"/>
    <property type="match status" value="1"/>
</dbReference>
<dbReference type="PANTHER" id="PTHR31683:SF18">
    <property type="entry name" value="PECTATE LYASE 21-RELATED"/>
    <property type="match status" value="1"/>
</dbReference>
<dbReference type="Pfam" id="PF00544">
    <property type="entry name" value="Pectate_lyase_4"/>
    <property type="match status" value="1"/>
</dbReference>
<dbReference type="SMART" id="SM00656">
    <property type="entry name" value="Amb_all"/>
    <property type="match status" value="1"/>
</dbReference>
<dbReference type="SUPFAM" id="SSF51126">
    <property type="entry name" value="Pectin lyase-like"/>
    <property type="match status" value="1"/>
</dbReference>
<sequence length="323" mass="34369">MTNFKWIVAAAGLLFGQVLAAPTATSTHAKRATVSDAAFGYASLNGGTTGGAGGTTTTVSSYAAFTSAVSGDDAKVVYVDGTIKQTADQVKIGSNTSIIGKDANAILEGFGVLVKEKENVIIRNLGVSKVLADNGDAIGVQYSNNVWIDHCDVSSDRDHDKDYYDGLIDITHGSDYVTVSNTFIHDHWKASLVGHSDSNEDEDSGHLTVTYANNYWYNVNSRAPSFRFGTGHVYNSYYLDVSDGINTRDGAQLLVESNQFVDSKKALYSTDDGYAVSNDNDFGDSENTAEEGTLTSMPYDYTLLGSANVKAAVVGTAGQTLTF</sequence>
<reference key="1">
    <citation type="journal article" date="2000" name="Biochemistry">
        <title>Characterization of Aspergillus niger pectate lyase A.</title>
        <authorList>
            <person name="Benen J.A."/>
            <person name="Kester H.C."/>
            <person name="Parenicova L."/>
            <person name="Visser J."/>
        </authorList>
    </citation>
    <scope>NUCLEOTIDE SEQUENCE [GENOMIC DNA]</scope>
    <scope>GLYCOSYLATION</scope>
    <scope>FUNCTION</scope>
    <scope>COFACTOR</scope>
    <scope>BIOPHYSICOCHEMICAL PROPERTIES</scope>
    <source>
        <strain>ATCC 9029 / NRRL 3 / CBS 120.49 / DSM 2466 / N400 / FGSC 732</strain>
    </source>
</reference>
<evidence type="ECO:0000250" key="1"/>
<evidence type="ECO:0000255" key="2"/>
<evidence type="ECO:0000269" key="3">
    <source>
    </source>
</evidence>
<evidence type="ECO:0000305" key="4"/>
<gene>
    <name type="primary">plyA</name>
</gene>
<protein>
    <recommendedName>
        <fullName>Pectate lyase A</fullName>
        <ecNumber>4.2.2.2</ecNumber>
    </recommendedName>
</protein>
<proteinExistence type="evidence at protein level"/>
<accession>Q9C2Z0</accession>
<organism>
    <name type="scientific">Aspergillus niger</name>
    <dbReference type="NCBI Taxonomy" id="5061"/>
    <lineage>
        <taxon>Eukaryota</taxon>
        <taxon>Fungi</taxon>
        <taxon>Dikarya</taxon>
        <taxon>Ascomycota</taxon>
        <taxon>Pezizomycotina</taxon>
        <taxon>Eurotiomycetes</taxon>
        <taxon>Eurotiomycetidae</taxon>
        <taxon>Eurotiales</taxon>
        <taxon>Aspergillaceae</taxon>
        <taxon>Aspergillus</taxon>
        <taxon>Aspergillus subgen. Circumdati</taxon>
    </lineage>
</organism>